<evidence type="ECO:0000250" key="1"/>
<evidence type="ECO:0000256" key="2">
    <source>
        <dbReference type="SAM" id="MobiDB-lite"/>
    </source>
</evidence>
<evidence type="ECO:0000305" key="3"/>
<evidence type="ECO:0007744" key="4">
    <source>
    </source>
</evidence>
<organism>
    <name type="scientific">Rattus norvegicus</name>
    <name type="common">Rat</name>
    <dbReference type="NCBI Taxonomy" id="10116"/>
    <lineage>
        <taxon>Eukaryota</taxon>
        <taxon>Metazoa</taxon>
        <taxon>Chordata</taxon>
        <taxon>Craniata</taxon>
        <taxon>Vertebrata</taxon>
        <taxon>Euteleostomi</taxon>
        <taxon>Mammalia</taxon>
        <taxon>Eutheria</taxon>
        <taxon>Euarchontoglires</taxon>
        <taxon>Glires</taxon>
        <taxon>Rodentia</taxon>
        <taxon>Myomorpha</taxon>
        <taxon>Muroidea</taxon>
        <taxon>Muridae</taxon>
        <taxon>Murinae</taxon>
        <taxon>Rattus</taxon>
    </lineage>
</organism>
<keyword id="KW-0217">Developmental protein</keyword>
<keyword id="KW-0221">Differentiation</keyword>
<keyword id="KW-0597">Phosphoprotein</keyword>
<keyword id="KW-1185">Reference proteome</keyword>
<keyword id="KW-0744">Spermatogenesis</keyword>
<feature type="chain" id="PRO_0000377729" description="Male-enhanced antigen 1">
    <location>
        <begin position="1"/>
        <end position="174"/>
    </location>
</feature>
<feature type="region of interest" description="Disordered" evidence="2">
    <location>
        <begin position="1"/>
        <end position="83"/>
    </location>
</feature>
<feature type="region of interest" description="Disordered" evidence="2">
    <location>
        <begin position="95"/>
        <end position="123"/>
    </location>
</feature>
<feature type="compositionally biased region" description="Acidic residues" evidence="2">
    <location>
        <begin position="38"/>
        <end position="48"/>
    </location>
</feature>
<feature type="compositionally biased region" description="Acidic residues" evidence="2">
    <location>
        <begin position="65"/>
        <end position="82"/>
    </location>
</feature>
<feature type="compositionally biased region" description="Acidic residues" evidence="2">
    <location>
        <begin position="101"/>
        <end position="110"/>
    </location>
</feature>
<feature type="modified residue" description="Phosphoserine" evidence="4">
    <location>
        <position position="103"/>
    </location>
</feature>
<name>MEA1_RAT</name>
<protein>
    <recommendedName>
        <fullName>Male-enhanced antigen 1</fullName>
        <shortName>MEA-1</shortName>
    </recommendedName>
</protein>
<accession>Q5FVH7</accession>
<proteinExistence type="evidence at protein level"/>
<sequence length="174" mass="18584">MAAVVLGGDTMGPERIFPNQTEDLGPHQGPTEGTGDWSSEEPEEEQEETGAGPAGYSYQPLNQDPEQEEVELAPVGEGEDGAADIQDRIQALGLHLPDPPLESEDEDEEGAAALSSHSSIPMDPEHVELVKRTMAGVSLPAPGVPAWAREISDAQWEDVVQKALQARQASPAWK</sequence>
<comment type="function">
    <text evidence="1">May play an important role in spermatogenesis and/or testis development.</text>
</comment>
<comment type="caution">
    <text evidence="3">It is uncertain whether Met-1 or Met-11 is the initiator.</text>
</comment>
<gene>
    <name type="primary">Mea1</name>
    <name type="synonym">Mea</name>
</gene>
<dbReference type="EMBL" id="CH473987">
    <property type="protein sequence ID" value="EDM18839.1"/>
    <property type="molecule type" value="Genomic_DNA"/>
</dbReference>
<dbReference type="EMBL" id="CH473987">
    <property type="protein sequence ID" value="EDM18841.1"/>
    <property type="molecule type" value="Genomic_DNA"/>
</dbReference>
<dbReference type="EMBL" id="CH473987">
    <property type="protein sequence ID" value="EDM18842.1"/>
    <property type="molecule type" value="Genomic_DNA"/>
</dbReference>
<dbReference type="EMBL" id="CH473987">
    <property type="protein sequence ID" value="EDM18843.1"/>
    <property type="molecule type" value="Genomic_DNA"/>
</dbReference>
<dbReference type="EMBL" id="CH473987">
    <property type="protein sequence ID" value="EDM18844.1"/>
    <property type="molecule type" value="Genomic_DNA"/>
</dbReference>
<dbReference type="EMBL" id="CH473987">
    <property type="protein sequence ID" value="EDM18845.1"/>
    <property type="molecule type" value="Genomic_DNA"/>
</dbReference>
<dbReference type="EMBL" id="BC089978">
    <property type="protein sequence ID" value="AAH89978.1"/>
    <property type="molecule type" value="mRNA"/>
</dbReference>
<dbReference type="RefSeq" id="NP_001037751.1">
    <property type="nucleotide sequence ID" value="NM_001044286.1"/>
</dbReference>
<dbReference type="RefSeq" id="XP_006244628.1">
    <property type="nucleotide sequence ID" value="XM_006244566.3"/>
</dbReference>
<dbReference type="RefSeq" id="XP_006244629.1">
    <property type="nucleotide sequence ID" value="XM_006244567.5"/>
</dbReference>
<dbReference type="RefSeq" id="XP_006244630.1">
    <property type="nucleotide sequence ID" value="XM_006244568.5"/>
</dbReference>
<dbReference type="RefSeq" id="XP_006244631.1">
    <property type="nucleotide sequence ID" value="XM_006244569.5"/>
</dbReference>
<dbReference type="RefSeq" id="XP_008765102.1">
    <property type="nucleotide sequence ID" value="XM_008766880.3"/>
</dbReference>
<dbReference type="RefSeq" id="XP_038940143.1">
    <property type="nucleotide sequence ID" value="XM_039084215.2"/>
</dbReference>
<dbReference type="RefSeq" id="XP_038940144.1">
    <property type="nucleotide sequence ID" value="XM_039084216.2"/>
</dbReference>
<dbReference type="FunCoup" id="Q5FVH7">
    <property type="interactions" value="957"/>
</dbReference>
<dbReference type="STRING" id="10116.ENSRNOP00000069326"/>
<dbReference type="iPTMnet" id="Q5FVH7"/>
<dbReference type="PhosphoSitePlus" id="Q5FVH7"/>
<dbReference type="jPOST" id="Q5FVH7"/>
<dbReference type="PaxDb" id="10116-ENSRNOP00000023495"/>
<dbReference type="Ensembl" id="ENSRNOT00000023495.5">
    <property type="protein sequence ID" value="ENSRNOP00000023495.2"/>
    <property type="gene ID" value="ENSRNOG00000017144.5"/>
</dbReference>
<dbReference type="GeneID" id="685131"/>
<dbReference type="KEGG" id="rno:685131"/>
<dbReference type="UCSC" id="RGD:1597751">
    <property type="organism name" value="rat"/>
</dbReference>
<dbReference type="AGR" id="RGD:1597751"/>
<dbReference type="CTD" id="4201"/>
<dbReference type="RGD" id="1597751">
    <property type="gene designation" value="Mea1"/>
</dbReference>
<dbReference type="eggNOG" id="ENOG502S34Y">
    <property type="taxonomic scope" value="Eukaryota"/>
</dbReference>
<dbReference type="GeneTree" id="ENSGT00390000016927"/>
<dbReference type="HOGENOM" id="CLU_096511_0_0_1"/>
<dbReference type="InParanoid" id="Q5FVH7"/>
<dbReference type="OMA" id="SIPMDPD"/>
<dbReference type="OrthoDB" id="65619at9989"/>
<dbReference type="PhylomeDB" id="Q5FVH7"/>
<dbReference type="TreeFam" id="TF332365"/>
<dbReference type="PRO" id="PR:Q5FVH7"/>
<dbReference type="Proteomes" id="UP000002494">
    <property type="component" value="Chromosome 9"/>
</dbReference>
<dbReference type="Proteomes" id="UP000234681">
    <property type="component" value="Chromosome 9"/>
</dbReference>
<dbReference type="Bgee" id="ENSRNOG00000017144">
    <property type="expression patterns" value="Expressed in testis and 20 other cell types or tissues"/>
</dbReference>
<dbReference type="ExpressionAtlas" id="Q5FVH7">
    <property type="expression patterns" value="baseline and differential"/>
</dbReference>
<dbReference type="GO" id="GO:0005737">
    <property type="term" value="C:cytoplasm"/>
    <property type="evidence" value="ECO:0000266"/>
    <property type="project" value="RGD"/>
</dbReference>
<dbReference type="GO" id="GO:0030154">
    <property type="term" value="P:cell differentiation"/>
    <property type="evidence" value="ECO:0007669"/>
    <property type="project" value="UniProtKB-KW"/>
</dbReference>
<dbReference type="GO" id="GO:0007283">
    <property type="term" value="P:spermatogenesis"/>
    <property type="evidence" value="ECO:0007669"/>
    <property type="project" value="UniProtKB-KW"/>
</dbReference>
<dbReference type="InterPro" id="IPR009685">
    <property type="entry name" value="MEA1"/>
</dbReference>
<dbReference type="PANTHER" id="PTHR17005">
    <property type="entry name" value="MALE-ENHANCED ANTIGEN-1"/>
    <property type="match status" value="1"/>
</dbReference>
<dbReference type="Pfam" id="PF06910">
    <property type="entry name" value="MEA1"/>
    <property type="match status" value="1"/>
</dbReference>
<reference key="1">
    <citation type="submission" date="2005-09" db="EMBL/GenBank/DDBJ databases">
        <authorList>
            <person name="Mural R.J."/>
            <person name="Adams M.D."/>
            <person name="Myers E.W."/>
            <person name="Smith H.O."/>
            <person name="Venter J.C."/>
        </authorList>
    </citation>
    <scope>NUCLEOTIDE SEQUENCE [LARGE SCALE GENOMIC DNA]</scope>
</reference>
<reference key="2">
    <citation type="journal article" date="2004" name="Genome Res.">
        <title>The status, quality, and expansion of the NIH full-length cDNA project: the Mammalian Gene Collection (MGC).</title>
        <authorList>
            <consortium name="The MGC Project Team"/>
        </authorList>
    </citation>
    <scope>NUCLEOTIDE SEQUENCE [LARGE SCALE MRNA]</scope>
    <source>
        <tissue>Brain</tissue>
    </source>
</reference>
<reference key="3">
    <citation type="journal article" date="2012" name="Nat. Commun.">
        <title>Quantitative maps of protein phosphorylation sites across 14 different rat organs and tissues.</title>
        <authorList>
            <person name="Lundby A."/>
            <person name="Secher A."/>
            <person name="Lage K."/>
            <person name="Nordsborg N.B."/>
            <person name="Dmytriyev A."/>
            <person name="Lundby C."/>
            <person name="Olsen J.V."/>
        </authorList>
    </citation>
    <scope>PHOSPHORYLATION [LARGE SCALE ANALYSIS] AT SER-103</scope>
    <scope>IDENTIFICATION BY MASS SPECTROMETRY [LARGE SCALE ANALYSIS]</scope>
</reference>